<comment type="function">
    <text evidence="1">Probable transcription factor involved in flower development.</text>
</comment>
<comment type="subcellular location">
    <subcellularLocation>
        <location evidence="2">Nucleus</location>
    </subcellularLocation>
</comment>
<comment type="tissue specificity">
    <text evidence="4">Expressed in tendrils and flowers.</text>
</comment>
<keyword id="KW-0238">DNA-binding</keyword>
<keyword id="KW-0287">Flowering</keyword>
<keyword id="KW-0539">Nucleus</keyword>
<keyword id="KW-1185">Reference proteome</keyword>
<keyword id="KW-0804">Transcription</keyword>
<keyword id="KW-0805">Transcription regulation</keyword>
<reference key="1">
    <citation type="journal article" date="2004" name="Plant Physiol.">
        <title>Floral meristem identity genes are expressed during tendril development in grapevine.</title>
        <authorList>
            <person name="Calonje M."/>
            <person name="Cubas P."/>
            <person name="Martinez-Zapater J.M."/>
            <person name="Carmona M.J."/>
        </authorList>
    </citation>
    <scope>NUCLEOTIDE SEQUENCE [MRNA]</scope>
    <scope>TISSUE SPECIFICITY</scope>
    <source>
        <strain>cv. Tempranillo</strain>
    </source>
</reference>
<reference key="2">
    <citation type="submission" date="2009-10" db="EMBL/GenBank/DDBJ databases">
        <title>Characterization of seven important genes involved in grapevine flower development.</title>
        <authorList>
            <person name="Fang J.G."/>
            <person name="Yang G."/>
            <person name="Song C.N."/>
            <person name="Wang X.C."/>
            <person name="Wang C."/>
            <person name="Zhang X.Y."/>
        </authorList>
    </citation>
    <scope>NUCLEOTIDE SEQUENCE [MRNA]</scope>
    <source>
        <strain>cv. Xiangyue</strain>
        <tissue>Flower</tissue>
    </source>
</reference>
<reference key="3">
    <citation type="journal article" date="2007" name="Nature">
        <title>The grapevine genome sequence suggests ancestral hexaploidization in major angiosperm phyla.</title>
        <authorList>
            <person name="Jaillon O."/>
            <person name="Aury J.-M."/>
            <person name="Noel B."/>
            <person name="Policriti A."/>
            <person name="Clepet C."/>
            <person name="Casagrande A."/>
            <person name="Choisne N."/>
            <person name="Aubourg S."/>
            <person name="Vitulo N."/>
            <person name="Jubin C."/>
            <person name="Vezzi A."/>
            <person name="Legeai F."/>
            <person name="Hugueney P."/>
            <person name="Dasilva C."/>
            <person name="Horner D."/>
            <person name="Mica E."/>
            <person name="Jublot D."/>
            <person name="Poulain J."/>
            <person name="Bruyere C."/>
            <person name="Billault A."/>
            <person name="Segurens B."/>
            <person name="Gouyvenoux M."/>
            <person name="Ugarte E."/>
            <person name="Cattonaro F."/>
            <person name="Anthouard V."/>
            <person name="Vico V."/>
            <person name="Del Fabbro C."/>
            <person name="Alaux M."/>
            <person name="Di Gaspero G."/>
            <person name="Dumas V."/>
            <person name="Felice N."/>
            <person name="Paillard S."/>
            <person name="Juman I."/>
            <person name="Moroldo M."/>
            <person name="Scalabrin S."/>
            <person name="Canaguier A."/>
            <person name="Le Clainche I."/>
            <person name="Malacrida G."/>
            <person name="Durand E."/>
            <person name="Pesole G."/>
            <person name="Laucou V."/>
            <person name="Chatelet P."/>
            <person name="Merdinoglu D."/>
            <person name="Delledonne M."/>
            <person name="Pezzotti M."/>
            <person name="Lecharny A."/>
            <person name="Scarpelli C."/>
            <person name="Artiguenave F."/>
            <person name="Pe M.E."/>
            <person name="Valle G."/>
            <person name="Morgante M."/>
            <person name="Caboche M."/>
            <person name="Adam-Blondon A.-F."/>
            <person name="Weissenbach J."/>
            <person name="Quetier F."/>
            <person name="Wincker P."/>
        </authorList>
    </citation>
    <scope>NUCLEOTIDE SEQUENCE [LARGE SCALE GENOMIC DNA]</scope>
    <source>
        <strain>cv. Pinot noir / PN40024</strain>
    </source>
</reference>
<reference key="4">
    <citation type="journal article" date="2007" name="PLoS ONE">
        <title>A high quality draft consensus sequence of the genome of a heterozygous grapevine variety.</title>
        <authorList>
            <person name="Velasco R."/>
            <person name="Zharkikh A."/>
            <person name="Troggio M."/>
            <person name="Cartwright D.A."/>
            <person name="Cestaro A."/>
            <person name="Pruss D."/>
            <person name="Pindo M."/>
            <person name="FitzGerald L.M."/>
            <person name="Vezzulli S."/>
            <person name="Reid J."/>
            <person name="Malacarne G."/>
            <person name="Iliev D."/>
            <person name="Coppola G."/>
            <person name="Wardell B."/>
            <person name="Micheletti D."/>
            <person name="Macalma T."/>
            <person name="Facci M."/>
            <person name="Mitchell J.T."/>
            <person name="Perazzolli M."/>
            <person name="Eldredge G."/>
            <person name="Gatto P."/>
            <person name="Oyzerski R."/>
            <person name="Moretto M."/>
            <person name="Gutin N."/>
            <person name="Stefanini M."/>
            <person name="Chen Y."/>
            <person name="Segala C."/>
            <person name="Davenport C."/>
            <person name="Dematte L."/>
            <person name="Mraz A."/>
            <person name="Battilana J."/>
            <person name="Stormo K."/>
            <person name="Costa F."/>
            <person name="Tao Q."/>
            <person name="Si-Ammour A."/>
            <person name="Harkins T."/>
            <person name="Lackey A."/>
            <person name="Perbost C."/>
            <person name="Taillon B."/>
            <person name="Stella A."/>
            <person name="Solovyev V."/>
            <person name="Fawcett J.A."/>
            <person name="Sterck L."/>
            <person name="Vandepoele K."/>
            <person name="Grando S.M."/>
            <person name="Toppo S."/>
            <person name="Moser C."/>
            <person name="Lanchbury J."/>
            <person name="Bogden R."/>
            <person name="Skolnick M."/>
            <person name="Sgaramella V."/>
            <person name="Bhatnagar S.K."/>
            <person name="Fontana P."/>
            <person name="Gutin A."/>
            <person name="Van de Peer Y."/>
            <person name="Salamini F."/>
            <person name="Viola R."/>
        </authorList>
    </citation>
    <scope>NUCLEOTIDE SEQUENCE [LARGE SCALE GENOMIC DNA]</scope>
    <source>
        <strain>cv. Pinot noir</strain>
    </source>
</reference>
<reference key="5">
    <citation type="journal article" date="2009" name="Plant Physiol.">
        <title>Genome-wide analysis of MIKCC-type MADS box genes in grapevine.</title>
        <authorList>
            <person name="Diaz-Riquelme J."/>
            <person name="Lijavetzky D."/>
            <person name="Martinez-Zapater J.M."/>
            <person name="Carmona M.J."/>
        </authorList>
    </citation>
    <scope>GENE FAMILY</scope>
</reference>
<reference key="6">
    <citation type="journal article" date="2016" name="BMC Genomics">
        <title>Structural and functional annotation of the MADS-box transcription factor family in grapevine.</title>
        <authorList>
            <person name="Grimplet J."/>
            <person name="Martinez-Zapater J.M."/>
            <person name="Carmona M.J."/>
        </authorList>
    </citation>
    <scope>GENE FAMILY</scope>
</reference>
<dbReference type="EMBL" id="AY538746">
    <property type="protein sequence ID" value="AAT07447.1"/>
    <property type="molecule type" value="mRNA"/>
</dbReference>
<dbReference type="EMBL" id="GU133634">
    <property type="protein sequence ID" value="ACZ26528.1"/>
    <property type="molecule type" value="mRNA"/>
</dbReference>
<dbReference type="EMBL" id="FN597015">
    <property type="protein sequence ID" value="CBI27320.3"/>
    <property type="molecule type" value="Genomic_DNA"/>
</dbReference>
<dbReference type="EMBL" id="AM437374">
    <property type="protein sequence ID" value="CAN71708.1"/>
    <property type="molecule type" value="Genomic_DNA"/>
</dbReference>
<dbReference type="RefSeq" id="NP_001268210.1">
    <property type="nucleotide sequence ID" value="NM_001281281.1"/>
</dbReference>
<dbReference type="SMR" id="Q6E6S7"/>
<dbReference type="FunCoup" id="Q6E6S7">
    <property type="interactions" value="22"/>
</dbReference>
<dbReference type="STRING" id="29760.Q6E6S7"/>
<dbReference type="PaxDb" id="29760-VIT_01s0011g00100.t01"/>
<dbReference type="EnsemblPlants" id="Vitvi01g00008_t001">
    <property type="protein sequence ID" value="Vitvi01g00008_P001"/>
    <property type="gene ID" value="Vitvi01g00008"/>
</dbReference>
<dbReference type="GeneID" id="100232952"/>
<dbReference type="Gramene" id="Vitvi01g00008_t001">
    <property type="protein sequence ID" value="Vitvi01g00008_P001"/>
    <property type="gene ID" value="Vitvi01g00008"/>
</dbReference>
<dbReference type="KEGG" id="vvi:100232952"/>
<dbReference type="eggNOG" id="KOG0014">
    <property type="taxonomic scope" value="Eukaryota"/>
</dbReference>
<dbReference type="HOGENOM" id="CLU_053053_0_2_1"/>
<dbReference type="InParanoid" id="Q6E6S7"/>
<dbReference type="OMA" id="HLGCFTT"/>
<dbReference type="OrthoDB" id="1898716at2759"/>
<dbReference type="Proteomes" id="UP000009183">
    <property type="component" value="Chromosome 1"/>
</dbReference>
<dbReference type="ExpressionAtlas" id="Q6E6S7">
    <property type="expression patterns" value="baseline"/>
</dbReference>
<dbReference type="GO" id="GO:0005634">
    <property type="term" value="C:nucleus"/>
    <property type="evidence" value="ECO:0007669"/>
    <property type="project" value="UniProtKB-SubCell"/>
</dbReference>
<dbReference type="GO" id="GO:0000981">
    <property type="term" value="F:DNA-binding transcription factor activity, RNA polymerase II-specific"/>
    <property type="evidence" value="ECO:0000318"/>
    <property type="project" value="GO_Central"/>
</dbReference>
<dbReference type="GO" id="GO:0046983">
    <property type="term" value="F:protein dimerization activity"/>
    <property type="evidence" value="ECO:0007669"/>
    <property type="project" value="InterPro"/>
</dbReference>
<dbReference type="GO" id="GO:0000978">
    <property type="term" value="F:RNA polymerase II cis-regulatory region sequence-specific DNA binding"/>
    <property type="evidence" value="ECO:0000318"/>
    <property type="project" value="GO_Central"/>
</dbReference>
<dbReference type="GO" id="GO:0010582">
    <property type="term" value="P:floral meristem determinacy"/>
    <property type="evidence" value="ECO:0000318"/>
    <property type="project" value="GO_Central"/>
</dbReference>
<dbReference type="GO" id="GO:0045944">
    <property type="term" value="P:positive regulation of transcription by RNA polymerase II"/>
    <property type="evidence" value="ECO:0007669"/>
    <property type="project" value="InterPro"/>
</dbReference>
<dbReference type="GO" id="GO:0006357">
    <property type="term" value="P:regulation of transcription by RNA polymerase II"/>
    <property type="evidence" value="ECO:0000318"/>
    <property type="project" value="GO_Central"/>
</dbReference>
<dbReference type="CDD" id="cd00265">
    <property type="entry name" value="MADS_MEF2_like"/>
    <property type="match status" value="1"/>
</dbReference>
<dbReference type="FunFam" id="3.40.1810.10:FF:000003">
    <property type="entry name" value="MADS-box transcription factor MADS-MC"/>
    <property type="match status" value="1"/>
</dbReference>
<dbReference type="Gene3D" id="3.40.1810.10">
    <property type="entry name" value="Transcription factor, MADS-box"/>
    <property type="match status" value="1"/>
</dbReference>
<dbReference type="InterPro" id="IPR050142">
    <property type="entry name" value="MADS-box/MEF2_TF"/>
</dbReference>
<dbReference type="InterPro" id="IPR033896">
    <property type="entry name" value="MEF2-like_N"/>
</dbReference>
<dbReference type="InterPro" id="IPR002487">
    <property type="entry name" value="TF_Kbox"/>
</dbReference>
<dbReference type="InterPro" id="IPR002100">
    <property type="entry name" value="TF_MADSbox"/>
</dbReference>
<dbReference type="InterPro" id="IPR036879">
    <property type="entry name" value="TF_MADSbox_sf"/>
</dbReference>
<dbReference type="PANTHER" id="PTHR48019">
    <property type="entry name" value="SERUM RESPONSE FACTOR HOMOLOG"/>
    <property type="match status" value="1"/>
</dbReference>
<dbReference type="Pfam" id="PF01486">
    <property type="entry name" value="K-box"/>
    <property type="match status" value="1"/>
</dbReference>
<dbReference type="Pfam" id="PF00319">
    <property type="entry name" value="SRF-TF"/>
    <property type="match status" value="1"/>
</dbReference>
<dbReference type="PRINTS" id="PR00404">
    <property type="entry name" value="MADSDOMAIN"/>
</dbReference>
<dbReference type="SMART" id="SM00432">
    <property type="entry name" value="MADS"/>
    <property type="match status" value="1"/>
</dbReference>
<dbReference type="SUPFAM" id="SSF55455">
    <property type="entry name" value="SRF-like"/>
    <property type="match status" value="1"/>
</dbReference>
<dbReference type="PROSITE" id="PS51297">
    <property type="entry name" value="K_BOX"/>
    <property type="match status" value="1"/>
</dbReference>
<dbReference type="PROSITE" id="PS00350">
    <property type="entry name" value="MADS_BOX_1"/>
    <property type="match status" value="1"/>
</dbReference>
<dbReference type="PROSITE" id="PS50066">
    <property type="entry name" value="MADS_BOX_2"/>
    <property type="match status" value="1"/>
</dbReference>
<sequence length="241" mass="27992">MGRGRVQLKRIENKINRQVTFSKRRTGLLKKAHEISVLCDAEVALIVFSTKGKLFEYSTDSCMEKILDRYERYSYAERQLTATDPESQGNWSLEYSKLKAKIELLQRSQRHFLGEDLDSLSLKELQNLEQQLDTALKHIRSRKNQLMYESISELQRKEKAMQEQNNMLAKEIKEKEKTVAQQTHWEQQNHGLNTSSFLLPQQLPCLNMGGTYQGEAHGARRNELDLTLEPIYPSHLGCFTT</sequence>
<gene>
    <name evidence="5" type="primary">AP1</name>
    <name evidence="10" type="ordered locus">VIT_01s0011g00100</name>
    <name evidence="9" type="ORF">VITISV_013455</name>
</gene>
<organism>
    <name type="scientific">Vitis vinifera</name>
    <name type="common">Grape</name>
    <dbReference type="NCBI Taxonomy" id="29760"/>
    <lineage>
        <taxon>Eukaryota</taxon>
        <taxon>Viridiplantae</taxon>
        <taxon>Streptophyta</taxon>
        <taxon>Embryophyta</taxon>
        <taxon>Tracheophyta</taxon>
        <taxon>Spermatophyta</taxon>
        <taxon>Magnoliopsida</taxon>
        <taxon>eudicotyledons</taxon>
        <taxon>Gunneridae</taxon>
        <taxon>Pentapetalae</taxon>
        <taxon>rosids</taxon>
        <taxon>Vitales</taxon>
        <taxon>Vitaceae</taxon>
        <taxon>Viteae</taxon>
        <taxon>Vitis</taxon>
    </lineage>
</organism>
<feature type="chain" id="PRO_0000447285" description="Agamous-like MADS-box protein AP1">
    <location>
        <begin position="1"/>
        <end position="241"/>
    </location>
</feature>
<feature type="domain" description="MADS-box" evidence="2">
    <location>
        <begin position="1"/>
        <end position="61"/>
    </location>
</feature>
<feature type="domain" description="K-box" evidence="3">
    <location>
        <begin position="88"/>
        <end position="178"/>
    </location>
</feature>
<feature type="sequence conflict" description="In Ref. 2; ACZ26528." evidence="8" ref="2">
    <original>T</original>
    <variation>S</variation>
    <location>
        <position position="134"/>
    </location>
</feature>
<name>AP1_VITVI</name>
<evidence type="ECO:0000250" key="1">
    <source>
        <dbReference type="UniProtKB" id="Q0HA25"/>
    </source>
</evidence>
<evidence type="ECO:0000255" key="2">
    <source>
        <dbReference type="PROSITE-ProRule" id="PRU00251"/>
    </source>
</evidence>
<evidence type="ECO:0000255" key="3">
    <source>
        <dbReference type="PROSITE-ProRule" id="PRU00629"/>
    </source>
</evidence>
<evidence type="ECO:0000269" key="4">
    <source>
    </source>
</evidence>
<evidence type="ECO:0000303" key="5">
    <source>
    </source>
</evidence>
<evidence type="ECO:0000303" key="6">
    <source>
    </source>
</evidence>
<evidence type="ECO:0000303" key="7">
    <source>
    </source>
</evidence>
<evidence type="ECO:0000305" key="8"/>
<evidence type="ECO:0000312" key="9">
    <source>
        <dbReference type="EMBL" id="CAN71708.1"/>
    </source>
</evidence>
<evidence type="ECO:0000312" key="10">
    <source>
        <dbReference type="EMBL" id="CBI27320.3"/>
    </source>
</evidence>
<protein>
    <recommendedName>
        <fullName evidence="8">Agamous-like MADS-box protein AP1</fullName>
    </recommendedName>
    <alternativeName>
        <fullName evidence="5">APETALA1-like protein</fullName>
        <shortName evidence="5">AP1-like protein</shortName>
        <shortName evidence="6">VvAP1</shortName>
        <shortName evidence="7">VviAP1</shortName>
    </alternativeName>
</protein>
<proteinExistence type="evidence at transcript level"/>
<accession>Q6E6S7</accession>
<accession>D1MDP8</accession>